<organism>
    <name type="scientific">Clostridium beijerinckii (strain ATCC 51743 / NCIMB 8052)</name>
    <name type="common">Clostridium acetobutylicum</name>
    <dbReference type="NCBI Taxonomy" id="290402"/>
    <lineage>
        <taxon>Bacteria</taxon>
        <taxon>Bacillati</taxon>
        <taxon>Bacillota</taxon>
        <taxon>Clostridia</taxon>
        <taxon>Eubacteriales</taxon>
        <taxon>Clostridiaceae</taxon>
        <taxon>Clostridium</taxon>
    </lineage>
</organism>
<reference key="1">
    <citation type="submission" date="2007-06" db="EMBL/GenBank/DDBJ databases">
        <title>Complete sequence of Clostridium beijerinckii NCIMB 8052.</title>
        <authorList>
            <consortium name="US DOE Joint Genome Institute"/>
            <person name="Copeland A."/>
            <person name="Lucas S."/>
            <person name="Lapidus A."/>
            <person name="Barry K."/>
            <person name="Detter J.C."/>
            <person name="Glavina del Rio T."/>
            <person name="Hammon N."/>
            <person name="Israni S."/>
            <person name="Dalin E."/>
            <person name="Tice H."/>
            <person name="Pitluck S."/>
            <person name="Sims D."/>
            <person name="Brettin T."/>
            <person name="Bruce D."/>
            <person name="Tapia R."/>
            <person name="Brainard J."/>
            <person name="Schmutz J."/>
            <person name="Larimer F."/>
            <person name="Land M."/>
            <person name="Hauser L."/>
            <person name="Kyrpides N."/>
            <person name="Mikhailova N."/>
            <person name="Bennet G."/>
            <person name="Cann I."/>
            <person name="Chen J.-S."/>
            <person name="Contreras A.L."/>
            <person name="Jones D."/>
            <person name="Kashket E."/>
            <person name="Mitchell W."/>
            <person name="Stoddard S."/>
            <person name="Schwarz W."/>
            <person name="Qureshi N."/>
            <person name="Young M."/>
            <person name="Shi Z."/>
            <person name="Ezeji T."/>
            <person name="White B."/>
            <person name="Blaschek H."/>
            <person name="Richardson P."/>
        </authorList>
    </citation>
    <scope>NUCLEOTIDE SEQUENCE [LARGE SCALE GENOMIC DNA]</scope>
    <source>
        <strain>ATCC 51743 / NCIMB 8052</strain>
    </source>
</reference>
<gene>
    <name evidence="1" type="primary">rplW</name>
    <name type="ordered locus">Cbei_0153</name>
</gene>
<name>RL23_CLOB8</name>
<dbReference type="EMBL" id="CP000721">
    <property type="protein sequence ID" value="ABR32343.1"/>
    <property type="molecule type" value="Genomic_DNA"/>
</dbReference>
<dbReference type="RefSeq" id="WP_011967513.1">
    <property type="nucleotide sequence ID" value="NC_009617.1"/>
</dbReference>
<dbReference type="SMR" id="A6LPR3"/>
<dbReference type="GeneID" id="66343043"/>
<dbReference type="KEGG" id="cbe:Cbei_0153"/>
<dbReference type="eggNOG" id="COG0089">
    <property type="taxonomic scope" value="Bacteria"/>
</dbReference>
<dbReference type="HOGENOM" id="CLU_037562_3_2_9"/>
<dbReference type="Proteomes" id="UP000000565">
    <property type="component" value="Chromosome"/>
</dbReference>
<dbReference type="GO" id="GO:1990904">
    <property type="term" value="C:ribonucleoprotein complex"/>
    <property type="evidence" value="ECO:0007669"/>
    <property type="project" value="UniProtKB-KW"/>
</dbReference>
<dbReference type="GO" id="GO:0005840">
    <property type="term" value="C:ribosome"/>
    <property type="evidence" value="ECO:0007669"/>
    <property type="project" value="UniProtKB-KW"/>
</dbReference>
<dbReference type="GO" id="GO:0019843">
    <property type="term" value="F:rRNA binding"/>
    <property type="evidence" value="ECO:0007669"/>
    <property type="project" value="UniProtKB-UniRule"/>
</dbReference>
<dbReference type="GO" id="GO:0003735">
    <property type="term" value="F:structural constituent of ribosome"/>
    <property type="evidence" value="ECO:0007669"/>
    <property type="project" value="InterPro"/>
</dbReference>
<dbReference type="GO" id="GO:0006412">
    <property type="term" value="P:translation"/>
    <property type="evidence" value="ECO:0007669"/>
    <property type="project" value="UniProtKB-UniRule"/>
</dbReference>
<dbReference type="FunFam" id="3.30.70.330:FF:000001">
    <property type="entry name" value="50S ribosomal protein L23"/>
    <property type="match status" value="1"/>
</dbReference>
<dbReference type="Gene3D" id="3.30.70.330">
    <property type="match status" value="1"/>
</dbReference>
<dbReference type="HAMAP" id="MF_01369_B">
    <property type="entry name" value="Ribosomal_uL23_B"/>
    <property type="match status" value="1"/>
</dbReference>
<dbReference type="InterPro" id="IPR012677">
    <property type="entry name" value="Nucleotide-bd_a/b_plait_sf"/>
</dbReference>
<dbReference type="InterPro" id="IPR013025">
    <property type="entry name" value="Ribosomal_uL23-like"/>
</dbReference>
<dbReference type="InterPro" id="IPR012678">
    <property type="entry name" value="Ribosomal_uL23/eL15/eS24_sf"/>
</dbReference>
<dbReference type="InterPro" id="IPR001014">
    <property type="entry name" value="Ribosomal_uL23_CS"/>
</dbReference>
<dbReference type="NCBIfam" id="NF004363">
    <property type="entry name" value="PRK05738.2-4"/>
    <property type="match status" value="1"/>
</dbReference>
<dbReference type="PANTHER" id="PTHR11620">
    <property type="entry name" value="60S RIBOSOMAL PROTEIN L23A"/>
    <property type="match status" value="1"/>
</dbReference>
<dbReference type="Pfam" id="PF00276">
    <property type="entry name" value="Ribosomal_L23"/>
    <property type="match status" value="1"/>
</dbReference>
<dbReference type="SUPFAM" id="SSF54189">
    <property type="entry name" value="Ribosomal proteins S24e, L23 and L15e"/>
    <property type="match status" value="1"/>
</dbReference>
<dbReference type="PROSITE" id="PS00050">
    <property type="entry name" value="RIBOSOMAL_L23"/>
    <property type="match status" value="1"/>
</dbReference>
<keyword id="KW-0687">Ribonucleoprotein</keyword>
<keyword id="KW-0689">Ribosomal protein</keyword>
<keyword id="KW-0694">RNA-binding</keyword>
<keyword id="KW-0699">rRNA-binding</keyword>
<protein>
    <recommendedName>
        <fullName evidence="1">Large ribosomal subunit protein uL23</fullName>
    </recommendedName>
    <alternativeName>
        <fullName evidence="2">50S ribosomal protein L23</fullName>
    </alternativeName>
</protein>
<feature type="chain" id="PRO_1000087211" description="Large ribosomal subunit protein uL23">
    <location>
        <begin position="1"/>
        <end position="98"/>
    </location>
</feature>
<accession>A6LPR3</accession>
<proteinExistence type="inferred from homology"/>
<evidence type="ECO:0000255" key="1">
    <source>
        <dbReference type="HAMAP-Rule" id="MF_01369"/>
    </source>
</evidence>
<evidence type="ECO:0000305" key="2"/>
<comment type="function">
    <text evidence="1">One of the early assembly proteins it binds 23S rRNA. One of the proteins that surrounds the polypeptide exit tunnel on the outside of the ribosome. Forms the main docking site for trigger factor binding to the ribosome.</text>
</comment>
<comment type="subunit">
    <text evidence="1">Part of the 50S ribosomal subunit. Contacts protein L29, and trigger factor when it is bound to the ribosome.</text>
</comment>
<comment type="similarity">
    <text evidence="1">Belongs to the universal ribosomal protein uL23 family.</text>
</comment>
<sequence length="98" mass="11115">MKLTSHDIIRKPIITEKSMASMAEKRYTFIVHVDANKSQIKRAVEEVFNVKVESVNTINGLGKTKRMGVHVGKRSDYKKAIVTLTEESNGIEFFEGMQ</sequence>